<comment type="function">
    <text evidence="1">This protein binds to 23S rRNA in the presence of protein L20.</text>
</comment>
<comment type="subunit">
    <text evidence="1">Part of the 50S ribosomal subunit. Contacts protein L20.</text>
</comment>
<comment type="similarity">
    <text evidence="1">Belongs to the bacterial ribosomal protein bL21 family.</text>
</comment>
<gene>
    <name evidence="1" type="primary">rplU</name>
    <name type="ordered locus">Spy49_0643</name>
</gene>
<feature type="chain" id="PRO_1000143858" description="Large ribosomal subunit protein bL21">
    <location>
        <begin position="1"/>
        <end position="104"/>
    </location>
</feature>
<dbReference type="EMBL" id="CP000829">
    <property type="protein sequence ID" value="ACI60964.1"/>
    <property type="molecule type" value="Genomic_DNA"/>
</dbReference>
<dbReference type="SMR" id="B5XKV2"/>
<dbReference type="KEGG" id="soz:Spy49_0643"/>
<dbReference type="HOGENOM" id="CLU_061463_3_1_9"/>
<dbReference type="Proteomes" id="UP000001039">
    <property type="component" value="Chromosome"/>
</dbReference>
<dbReference type="GO" id="GO:0005737">
    <property type="term" value="C:cytoplasm"/>
    <property type="evidence" value="ECO:0007669"/>
    <property type="project" value="UniProtKB-ARBA"/>
</dbReference>
<dbReference type="GO" id="GO:1990904">
    <property type="term" value="C:ribonucleoprotein complex"/>
    <property type="evidence" value="ECO:0007669"/>
    <property type="project" value="UniProtKB-KW"/>
</dbReference>
<dbReference type="GO" id="GO:0005840">
    <property type="term" value="C:ribosome"/>
    <property type="evidence" value="ECO:0007669"/>
    <property type="project" value="UniProtKB-KW"/>
</dbReference>
<dbReference type="GO" id="GO:0019843">
    <property type="term" value="F:rRNA binding"/>
    <property type="evidence" value="ECO:0007669"/>
    <property type="project" value="UniProtKB-UniRule"/>
</dbReference>
<dbReference type="GO" id="GO:0003735">
    <property type="term" value="F:structural constituent of ribosome"/>
    <property type="evidence" value="ECO:0007669"/>
    <property type="project" value="InterPro"/>
</dbReference>
<dbReference type="GO" id="GO:0006412">
    <property type="term" value="P:translation"/>
    <property type="evidence" value="ECO:0007669"/>
    <property type="project" value="UniProtKB-UniRule"/>
</dbReference>
<dbReference type="HAMAP" id="MF_01363">
    <property type="entry name" value="Ribosomal_bL21"/>
    <property type="match status" value="1"/>
</dbReference>
<dbReference type="InterPro" id="IPR028909">
    <property type="entry name" value="bL21-like"/>
</dbReference>
<dbReference type="InterPro" id="IPR036164">
    <property type="entry name" value="bL21-like_sf"/>
</dbReference>
<dbReference type="InterPro" id="IPR001787">
    <property type="entry name" value="Ribosomal_bL21"/>
</dbReference>
<dbReference type="InterPro" id="IPR018258">
    <property type="entry name" value="Ribosomal_bL21_CS"/>
</dbReference>
<dbReference type="NCBIfam" id="TIGR00061">
    <property type="entry name" value="L21"/>
    <property type="match status" value="1"/>
</dbReference>
<dbReference type="PANTHER" id="PTHR21349">
    <property type="entry name" value="50S RIBOSOMAL PROTEIN L21"/>
    <property type="match status" value="1"/>
</dbReference>
<dbReference type="PANTHER" id="PTHR21349:SF0">
    <property type="entry name" value="LARGE RIBOSOMAL SUBUNIT PROTEIN BL21M"/>
    <property type="match status" value="1"/>
</dbReference>
<dbReference type="Pfam" id="PF00829">
    <property type="entry name" value="Ribosomal_L21p"/>
    <property type="match status" value="1"/>
</dbReference>
<dbReference type="SUPFAM" id="SSF141091">
    <property type="entry name" value="L21p-like"/>
    <property type="match status" value="1"/>
</dbReference>
<dbReference type="PROSITE" id="PS01169">
    <property type="entry name" value="RIBOSOMAL_L21"/>
    <property type="match status" value="1"/>
</dbReference>
<organism>
    <name type="scientific">Streptococcus pyogenes serotype M49 (strain NZ131)</name>
    <dbReference type="NCBI Taxonomy" id="471876"/>
    <lineage>
        <taxon>Bacteria</taxon>
        <taxon>Bacillati</taxon>
        <taxon>Bacillota</taxon>
        <taxon>Bacilli</taxon>
        <taxon>Lactobacillales</taxon>
        <taxon>Streptococcaceae</taxon>
        <taxon>Streptococcus</taxon>
    </lineage>
</organism>
<evidence type="ECO:0000255" key="1">
    <source>
        <dbReference type="HAMAP-Rule" id="MF_01363"/>
    </source>
</evidence>
<evidence type="ECO:0000305" key="2"/>
<protein>
    <recommendedName>
        <fullName evidence="1">Large ribosomal subunit protein bL21</fullName>
    </recommendedName>
    <alternativeName>
        <fullName evidence="2">50S ribosomal protein L21</fullName>
    </alternativeName>
</protein>
<proteinExistence type="inferred from homology"/>
<name>RL21_STRPZ</name>
<accession>B5XKV2</accession>
<sequence length="104" mass="11155">MSTYAIIKTGGKQVKVEVGQAIYVEKIDAEAGAEVTFNEVVLVGGDKTVVGTPVVEGATVVGTVEKQGKQKKVVTFKYKPKKGSHRKQGHRQPYTKVVINAINA</sequence>
<reference key="1">
    <citation type="journal article" date="2008" name="J. Bacteriol.">
        <title>Genome sequence of a nephritogenic and highly transformable M49 strain of Streptococcus pyogenes.</title>
        <authorList>
            <person name="McShan W.M."/>
            <person name="Ferretti J.J."/>
            <person name="Karasawa T."/>
            <person name="Suvorov A.N."/>
            <person name="Lin S."/>
            <person name="Qin B."/>
            <person name="Jia H."/>
            <person name="Kenton S."/>
            <person name="Najar F."/>
            <person name="Wu H."/>
            <person name="Scott J."/>
            <person name="Roe B.A."/>
            <person name="Savic D.J."/>
        </authorList>
    </citation>
    <scope>NUCLEOTIDE SEQUENCE [LARGE SCALE GENOMIC DNA]</scope>
    <source>
        <strain>NZ131</strain>
    </source>
</reference>
<keyword id="KW-0687">Ribonucleoprotein</keyword>
<keyword id="KW-0689">Ribosomal protein</keyword>
<keyword id="KW-0694">RNA-binding</keyword>
<keyword id="KW-0699">rRNA-binding</keyword>